<gene>
    <name evidence="1" type="primary">ttcA</name>
    <name type="ordered locus">GM21_0629</name>
</gene>
<comment type="function">
    <text evidence="1">Catalyzes the ATP-dependent 2-thiolation of cytidine in position 32 of tRNA, to form 2-thiocytidine (s(2)C32). The sulfur atoms are provided by the cysteine/cysteine desulfurase (IscS) system.</text>
</comment>
<comment type="catalytic activity">
    <reaction evidence="1">
        <text>cytidine(32) in tRNA + S-sulfanyl-L-cysteinyl-[cysteine desulfurase] + AH2 + ATP = 2-thiocytidine(32) in tRNA + L-cysteinyl-[cysteine desulfurase] + A + AMP + diphosphate + H(+)</text>
        <dbReference type="Rhea" id="RHEA:57048"/>
        <dbReference type="Rhea" id="RHEA-COMP:10288"/>
        <dbReference type="Rhea" id="RHEA-COMP:12157"/>
        <dbReference type="Rhea" id="RHEA-COMP:12158"/>
        <dbReference type="Rhea" id="RHEA-COMP:14821"/>
        <dbReference type="ChEBI" id="CHEBI:13193"/>
        <dbReference type="ChEBI" id="CHEBI:15378"/>
        <dbReference type="ChEBI" id="CHEBI:17499"/>
        <dbReference type="ChEBI" id="CHEBI:29950"/>
        <dbReference type="ChEBI" id="CHEBI:30616"/>
        <dbReference type="ChEBI" id="CHEBI:33019"/>
        <dbReference type="ChEBI" id="CHEBI:61963"/>
        <dbReference type="ChEBI" id="CHEBI:82748"/>
        <dbReference type="ChEBI" id="CHEBI:141453"/>
        <dbReference type="ChEBI" id="CHEBI:456215"/>
    </reaction>
    <physiologicalReaction direction="left-to-right" evidence="1">
        <dbReference type="Rhea" id="RHEA:57049"/>
    </physiologicalReaction>
</comment>
<comment type="cofactor">
    <cofactor evidence="1">
        <name>Mg(2+)</name>
        <dbReference type="ChEBI" id="CHEBI:18420"/>
    </cofactor>
</comment>
<comment type="cofactor">
    <cofactor evidence="1">
        <name>[4Fe-4S] cluster</name>
        <dbReference type="ChEBI" id="CHEBI:49883"/>
    </cofactor>
    <text evidence="1">Binds 1 [4Fe-4S] cluster per subunit. The cluster is chelated by three Cys residues, the fourth Fe has a free coordination site that may bind a sulfur atom transferred from the persulfide of IscS.</text>
</comment>
<comment type="pathway">
    <text evidence="1">tRNA modification.</text>
</comment>
<comment type="subunit">
    <text evidence="1">Homodimer.</text>
</comment>
<comment type="subcellular location">
    <subcellularLocation>
        <location evidence="1">Cytoplasm</location>
    </subcellularLocation>
</comment>
<comment type="miscellaneous">
    <text evidence="1">The thiolation reaction likely consists of two steps: a first activation step by ATP to form an adenylated intermediate of the target base of tRNA, and a second nucleophilic substitution step of the sulfur (S) atom supplied by the hydrosulfide attached to the Fe-S cluster.</text>
</comment>
<comment type="similarity">
    <text evidence="1">Belongs to the TtcA family.</text>
</comment>
<organism>
    <name type="scientific">Geobacter sp. (strain M21)</name>
    <dbReference type="NCBI Taxonomy" id="443144"/>
    <lineage>
        <taxon>Bacteria</taxon>
        <taxon>Pseudomonadati</taxon>
        <taxon>Thermodesulfobacteriota</taxon>
        <taxon>Desulfuromonadia</taxon>
        <taxon>Geobacterales</taxon>
        <taxon>Geobacteraceae</taxon>
        <taxon>Geobacter</taxon>
    </lineage>
</organism>
<protein>
    <recommendedName>
        <fullName evidence="1">tRNA-cytidine(32) 2-sulfurtransferase</fullName>
        <ecNumber evidence="1">2.8.1.-</ecNumber>
    </recommendedName>
    <alternativeName>
        <fullName evidence="1">Two-thiocytidine biosynthesis protein A</fullName>
    </alternativeName>
    <alternativeName>
        <fullName evidence="1">tRNA 2-thiocytidine biosynthesis protein TtcA</fullName>
    </alternativeName>
</protein>
<feature type="chain" id="PRO_1000216131" description="tRNA-cytidine(32) 2-sulfurtransferase">
    <location>
        <begin position="1"/>
        <end position="255"/>
    </location>
</feature>
<feature type="short sequence motif" description="PP-loop motif" evidence="1">
    <location>
        <begin position="37"/>
        <end position="42"/>
    </location>
</feature>
<feature type="binding site" evidence="1">
    <location>
        <position position="112"/>
    </location>
    <ligand>
        <name>[4Fe-4S] cluster</name>
        <dbReference type="ChEBI" id="CHEBI:49883"/>
    </ligand>
</feature>
<feature type="binding site" evidence="1">
    <location>
        <position position="115"/>
    </location>
    <ligand>
        <name>[4Fe-4S] cluster</name>
        <dbReference type="ChEBI" id="CHEBI:49883"/>
    </ligand>
</feature>
<feature type="binding site" evidence="1">
    <location>
        <position position="202"/>
    </location>
    <ligand>
        <name>[4Fe-4S] cluster</name>
        <dbReference type="ChEBI" id="CHEBI:49883"/>
    </ligand>
</feature>
<keyword id="KW-0004">4Fe-4S</keyword>
<keyword id="KW-0067">ATP-binding</keyword>
<keyword id="KW-0963">Cytoplasm</keyword>
<keyword id="KW-0408">Iron</keyword>
<keyword id="KW-0411">Iron-sulfur</keyword>
<keyword id="KW-0460">Magnesium</keyword>
<keyword id="KW-0479">Metal-binding</keyword>
<keyword id="KW-0547">Nucleotide-binding</keyword>
<keyword id="KW-0694">RNA-binding</keyword>
<keyword id="KW-0808">Transferase</keyword>
<keyword id="KW-0819">tRNA processing</keyword>
<keyword id="KW-0820">tRNA-binding</keyword>
<name>TTCA_GEOSM</name>
<proteinExistence type="inferred from homology"/>
<evidence type="ECO:0000255" key="1">
    <source>
        <dbReference type="HAMAP-Rule" id="MF_01850"/>
    </source>
</evidence>
<accession>C6E087</accession>
<reference key="1">
    <citation type="submission" date="2009-07" db="EMBL/GenBank/DDBJ databases">
        <title>Complete sequence of Geobacter sp. M21.</title>
        <authorList>
            <consortium name="US DOE Joint Genome Institute"/>
            <person name="Lucas S."/>
            <person name="Copeland A."/>
            <person name="Lapidus A."/>
            <person name="Glavina del Rio T."/>
            <person name="Dalin E."/>
            <person name="Tice H."/>
            <person name="Bruce D."/>
            <person name="Goodwin L."/>
            <person name="Pitluck S."/>
            <person name="Saunders E."/>
            <person name="Brettin T."/>
            <person name="Detter J.C."/>
            <person name="Han C."/>
            <person name="Larimer F."/>
            <person name="Land M."/>
            <person name="Hauser L."/>
            <person name="Kyrpides N."/>
            <person name="Ovchinnikova G."/>
            <person name="Lovley D."/>
        </authorList>
    </citation>
    <scope>NUCLEOTIDE SEQUENCE [LARGE SCALE GENOMIC DNA]</scope>
    <source>
        <strain>M21</strain>
    </source>
</reference>
<dbReference type="EC" id="2.8.1.-" evidence="1"/>
<dbReference type="EMBL" id="CP001661">
    <property type="protein sequence ID" value="ACT16703.1"/>
    <property type="molecule type" value="Genomic_DNA"/>
</dbReference>
<dbReference type="SMR" id="C6E087"/>
<dbReference type="STRING" id="443144.GM21_0629"/>
<dbReference type="KEGG" id="gem:GM21_0629"/>
<dbReference type="eggNOG" id="COG0037">
    <property type="taxonomic scope" value="Bacteria"/>
</dbReference>
<dbReference type="HOGENOM" id="CLU_026481_0_0_7"/>
<dbReference type="OrthoDB" id="9801054at2"/>
<dbReference type="GO" id="GO:0005737">
    <property type="term" value="C:cytoplasm"/>
    <property type="evidence" value="ECO:0007669"/>
    <property type="project" value="UniProtKB-SubCell"/>
</dbReference>
<dbReference type="GO" id="GO:0051539">
    <property type="term" value="F:4 iron, 4 sulfur cluster binding"/>
    <property type="evidence" value="ECO:0007669"/>
    <property type="project" value="UniProtKB-KW"/>
</dbReference>
<dbReference type="GO" id="GO:0005524">
    <property type="term" value="F:ATP binding"/>
    <property type="evidence" value="ECO:0007669"/>
    <property type="project" value="UniProtKB-KW"/>
</dbReference>
<dbReference type="GO" id="GO:0046872">
    <property type="term" value="F:metal ion binding"/>
    <property type="evidence" value="ECO:0007669"/>
    <property type="project" value="UniProtKB-KW"/>
</dbReference>
<dbReference type="GO" id="GO:0016740">
    <property type="term" value="F:transferase activity"/>
    <property type="evidence" value="ECO:0007669"/>
    <property type="project" value="UniProtKB-KW"/>
</dbReference>
<dbReference type="GO" id="GO:0000049">
    <property type="term" value="F:tRNA binding"/>
    <property type="evidence" value="ECO:0007669"/>
    <property type="project" value="UniProtKB-KW"/>
</dbReference>
<dbReference type="GO" id="GO:0006400">
    <property type="term" value="P:tRNA modification"/>
    <property type="evidence" value="ECO:0007669"/>
    <property type="project" value="UniProtKB-ARBA"/>
</dbReference>
<dbReference type="CDD" id="cd24138">
    <property type="entry name" value="TtcA-like"/>
    <property type="match status" value="1"/>
</dbReference>
<dbReference type="Gene3D" id="3.40.50.620">
    <property type="entry name" value="HUPs"/>
    <property type="match status" value="1"/>
</dbReference>
<dbReference type="HAMAP" id="MF_01850">
    <property type="entry name" value="TtcA"/>
    <property type="match status" value="1"/>
</dbReference>
<dbReference type="InterPro" id="IPR014729">
    <property type="entry name" value="Rossmann-like_a/b/a_fold"/>
</dbReference>
<dbReference type="InterPro" id="IPR011063">
    <property type="entry name" value="TilS/TtcA_N"/>
</dbReference>
<dbReference type="InterPro" id="IPR012089">
    <property type="entry name" value="tRNA_Cyd_32_2_STrfase"/>
</dbReference>
<dbReference type="InterPro" id="IPR035107">
    <property type="entry name" value="tRNA_thiolation_TtcA_Ctu1"/>
</dbReference>
<dbReference type="NCBIfam" id="NF007972">
    <property type="entry name" value="PRK10696.1"/>
    <property type="match status" value="1"/>
</dbReference>
<dbReference type="PANTHER" id="PTHR43686:SF1">
    <property type="entry name" value="AMINOTRAN_5 DOMAIN-CONTAINING PROTEIN"/>
    <property type="match status" value="1"/>
</dbReference>
<dbReference type="PANTHER" id="PTHR43686">
    <property type="entry name" value="SULFURTRANSFERASE-RELATED"/>
    <property type="match status" value="1"/>
</dbReference>
<dbReference type="Pfam" id="PF01171">
    <property type="entry name" value="ATP_bind_3"/>
    <property type="match status" value="1"/>
</dbReference>
<dbReference type="PIRSF" id="PIRSF004976">
    <property type="entry name" value="ATPase_YdaO"/>
    <property type="match status" value="1"/>
</dbReference>
<dbReference type="SUPFAM" id="SSF52402">
    <property type="entry name" value="Adenine nucleotide alpha hydrolases-like"/>
    <property type="match status" value="1"/>
</dbReference>
<sequence>MALIEDAAFTRIKNRVGKAIAEFDLISEGDRVAVAVSGGKDSYTMLHMLETLRRRAPVRYELVAINIDSGYRGYRADIIEEHLREHGFTYHMEKTDHYDIISEKRRPNSSYCSICARLKRGTLYTLAQQYGCNKLALGHHMDDFIETLLLNQFFVGSLKAMAPSMLADNGVTTVIRPLVYVPEKEIIPFSRNNRFPVVCCCCPVCGTADLQRKKMKELLETLERDNPLVKKSLLTALSNVHPRHLLDKGLTRKPS</sequence>